<dbReference type="EC" id="2.4.1.18" evidence="1"/>
<dbReference type="EMBL" id="CP000038">
    <property type="protein sequence ID" value="AAZ90219.1"/>
    <property type="molecule type" value="Genomic_DNA"/>
</dbReference>
<dbReference type="RefSeq" id="WP_001283723.1">
    <property type="nucleotide sequence ID" value="NC_007384.1"/>
</dbReference>
<dbReference type="SMR" id="Q3YW93"/>
<dbReference type="CAZy" id="CBM48">
    <property type="family name" value="Carbohydrate-Binding Module Family 48"/>
</dbReference>
<dbReference type="CAZy" id="GH13">
    <property type="family name" value="Glycoside Hydrolase Family 13"/>
</dbReference>
<dbReference type="GeneID" id="93778557"/>
<dbReference type="KEGG" id="ssn:SSON_3672"/>
<dbReference type="HOGENOM" id="CLU_004245_3_2_6"/>
<dbReference type="UniPathway" id="UPA00164"/>
<dbReference type="Proteomes" id="UP000002529">
    <property type="component" value="Chromosome"/>
</dbReference>
<dbReference type="GO" id="GO:0005829">
    <property type="term" value="C:cytosol"/>
    <property type="evidence" value="ECO:0007669"/>
    <property type="project" value="TreeGrafter"/>
</dbReference>
<dbReference type="GO" id="GO:0003844">
    <property type="term" value="F:1,4-alpha-glucan branching enzyme activity"/>
    <property type="evidence" value="ECO:0007669"/>
    <property type="project" value="UniProtKB-UniRule"/>
</dbReference>
<dbReference type="GO" id="GO:0043169">
    <property type="term" value="F:cation binding"/>
    <property type="evidence" value="ECO:0007669"/>
    <property type="project" value="InterPro"/>
</dbReference>
<dbReference type="GO" id="GO:0004553">
    <property type="term" value="F:hydrolase activity, hydrolyzing O-glycosyl compounds"/>
    <property type="evidence" value="ECO:0007669"/>
    <property type="project" value="InterPro"/>
</dbReference>
<dbReference type="GO" id="GO:0005978">
    <property type="term" value="P:glycogen biosynthetic process"/>
    <property type="evidence" value="ECO:0007669"/>
    <property type="project" value="UniProtKB-UniRule"/>
</dbReference>
<dbReference type="CDD" id="cd11322">
    <property type="entry name" value="AmyAc_Glg_BE"/>
    <property type="match status" value="1"/>
</dbReference>
<dbReference type="CDD" id="cd02855">
    <property type="entry name" value="E_set_GBE_prok_N"/>
    <property type="match status" value="1"/>
</dbReference>
<dbReference type="FunFam" id="2.60.40.10:FF:000169">
    <property type="entry name" value="1,4-alpha-glucan branching enzyme GlgB"/>
    <property type="match status" value="1"/>
</dbReference>
<dbReference type="FunFam" id="2.60.40.10:FF:000331">
    <property type="entry name" value="1,4-alpha-glucan branching enzyme GlgB"/>
    <property type="match status" value="1"/>
</dbReference>
<dbReference type="FunFam" id="2.60.40.1180:FF:000002">
    <property type="entry name" value="1,4-alpha-glucan branching enzyme GlgB"/>
    <property type="match status" value="1"/>
</dbReference>
<dbReference type="FunFam" id="3.20.20.80:FF:000003">
    <property type="entry name" value="1,4-alpha-glucan branching enzyme GlgB"/>
    <property type="match status" value="1"/>
</dbReference>
<dbReference type="Gene3D" id="3.20.20.80">
    <property type="entry name" value="Glycosidases"/>
    <property type="match status" value="1"/>
</dbReference>
<dbReference type="Gene3D" id="2.60.40.1180">
    <property type="entry name" value="Golgi alpha-mannosidase II"/>
    <property type="match status" value="1"/>
</dbReference>
<dbReference type="Gene3D" id="2.60.40.10">
    <property type="entry name" value="Immunoglobulins"/>
    <property type="match status" value="2"/>
</dbReference>
<dbReference type="HAMAP" id="MF_00685">
    <property type="entry name" value="GlgB"/>
    <property type="match status" value="1"/>
</dbReference>
<dbReference type="InterPro" id="IPR006048">
    <property type="entry name" value="A-amylase/branching_C"/>
</dbReference>
<dbReference type="InterPro" id="IPR037439">
    <property type="entry name" value="Branching_enzy"/>
</dbReference>
<dbReference type="InterPro" id="IPR006407">
    <property type="entry name" value="GlgB"/>
</dbReference>
<dbReference type="InterPro" id="IPR054169">
    <property type="entry name" value="GlgB_N"/>
</dbReference>
<dbReference type="InterPro" id="IPR044143">
    <property type="entry name" value="GlgB_N_E_set_prok"/>
</dbReference>
<dbReference type="InterPro" id="IPR006047">
    <property type="entry name" value="Glyco_hydro_13_cat_dom"/>
</dbReference>
<dbReference type="InterPro" id="IPR004193">
    <property type="entry name" value="Glyco_hydro_13_N"/>
</dbReference>
<dbReference type="InterPro" id="IPR013780">
    <property type="entry name" value="Glyco_hydro_b"/>
</dbReference>
<dbReference type="InterPro" id="IPR017853">
    <property type="entry name" value="Glycoside_hydrolase_SF"/>
</dbReference>
<dbReference type="InterPro" id="IPR013783">
    <property type="entry name" value="Ig-like_fold"/>
</dbReference>
<dbReference type="InterPro" id="IPR014756">
    <property type="entry name" value="Ig_E-set"/>
</dbReference>
<dbReference type="NCBIfam" id="TIGR01515">
    <property type="entry name" value="branching_enzym"/>
    <property type="match status" value="1"/>
</dbReference>
<dbReference type="NCBIfam" id="NF003811">
    <property type="entry name" value="PRK05402.1"/>
    <property type="match status" value="1"/>
</dbReference>
<dbReference type="NCBIfam" id="NF008967">
    <property type="entry name" value="PRK12313.1"/>
    <property type="match status" value="1"/>
</dbReference>
<dbReference type="PANTHER" id="PTHR43651">
    <property type="entry name" value="1,4-ALPHA-GLUCAN-BRANCHING ENZYME"/>
    <property type="match status" value="1"/>
</dbReference>
<dbReference type="PANTHER" id="PTHR43651:SF3">
    <property type="entry name" value="1,4-ALPHA-GLUCAN-BRANCHING ENZYME"/>
    <property type="match status" value="1"/>
</dbReference>
<dbReference type="Pfam" id="PF00128">
    <property type="entry name" value="Alpha-amylase"/>
    <property type="match status" value="1"/>
</dbReference>
<dbReference type="Pfam" id="PF02806">
    <property type="entry name" value="Alpha-amylase_C"/>
    <property type="match status" value="1"/>
</dbReference>
<dbReference type="Pfam" id="PF02922">
    <property type="entry name" value="CBM_48"/>
    <property type="match status" value="1"/>
</dbReference>
<dbReference type="Pfam" id="PF22019">
    <property type="entry name" value="GlgB_N"/>
    <property type="match status" value="1"/>
</dbReference>
<dbReference type="PIRSF" id="PIRSF000463">
    <property type="entry name" value="GlgB"/>
    <property type="match status" value="1"/>
</dbReference>
<dbReference type="SMART" id="SM00642">
    <property type="entry name" value="Aamy"/>
    <property type="match status" value="1"/>
</dbReference>
<dbReference type="SUPFAM" id="SSF51445">
    <property type="entry name" value="(Trans)glycosidases"/>
    <property type="match status" value="1"/>
</dbReference>
<dbReference type="SUPFAM" id="SSF81296">
    <property type="entry name" value="E set domains"/>
    <property type="match status" value="2"/>
</dbReference>
<dbReference type="SUPFAM" id="SSF51011">
    <property type="entry name" value="Glycosyl hydrolase domain"/>
    <property type="match status" value="1"/>
</dbReference>
<proteinExistence type="inferred from homology"/>
<feature type="chain" id="PRO_0000260703" description="1,4-alpha-glucan branching enzyme GlgB">
    <location>
        <begin position="1"/>
        <end position="728"/>
    </location>
</feature>
<feature type="active site" description="Nucleophile" evidence="1">
    <location>
        <position position="405"/>
    </location>
</feature>
<feature type="active site" description="Proton donor" evidence="1">
    <location>
        <position position="458"/>
    </location>
</feature>
<keyword id="KW-0119">Carbohydrate metabolism</keyword>
<keyword id="KW-0320">Glycogen biosynthesis</keyword>
<keyword id="KW-0321">Glycogen metabolism</keyword>
<keyword id="KW-0328">Glycosyltransferase</keyword>
<keyword id="KW-1185">Reference proteome</keyword>
<keyword id="KW-0808">Transferase</keyword>
<organism>
    <name type="scientific">Shigella sonnei (strain Ss046)</name>
    <dbReference type="NCBI Taxonomy" id="300269"/>
    <lineage>
        <taxon>Bacteria</taxon>
        <taxon>Pseudomonadati</taxon>
        <taxon>Pseudomonadota</taxon>
        <taxon>Gammaproteobacteria</taxon>
        <taxon>Enterobacterales</taxon>
        <taxon>Enterobacteriaceae</taxon>
        <taxon>Shigella</taxon>
    </lineage>
</organism>
<reference key="1">
    <citation type="journal article" date="2005" name="Nucleic Acids Res.">
        <title>Genome dynamics and diversity of Shigella species, the etiologic agents of bacillary dysentery.</title>
        <authorList>
            <person name="Yang F."/>
            <person name="Yang J."/>
            <person name="Zhang X."/>
            <person name="Chen L."/>
            <person name="Jiang Y."/>
            <person name="Yan Y."/>
            <person name="Tang X."/>
            <person name="Wang J."/>
            <person name="Xiong Z."/>
            <person name="Dong J."/>
            <person name="Xue Y."/>
            <person name="Zhu Y."/>
            <person name="Xu X."/>
            <person name="Sun L."/>
            <person name="Chen S."/>
            <person name="Nie H."/>
            <person name="Peng J."/>
            <person name="Xu J."/>
            <person name="Wang Y."/>
            <person name="Yuan Z."/>
            <person name="Wen Y."/>
            <person name="Yao Z."/>
            <person name="Shen Y."/>
            <person name="Qiang B."/>
            <person name="Hou Y."/>
            <person name="Yu J."/>
            <person name="Jin Q."/>
        </authorList>
    </citation>
    <scope>NUCLEOTIDE SEQUENCE [LARGE SCALE GENOMIC DNA]</scope>
    <source>
        <strain>Ss046</strain>
    </source>
</reference>
<evidence type="ECO:0000255" key="1">
    <source>
        <dbReference type="HAMAP-Rule" id="MF_00685"/>
    </source>
</evidence>
<accession>Q3YW93</accession>
<protein>
    <recommendedName>
        <fullName evidence="1">1,4-alpha-glucan branching enzyme GlgB</fullName>
        <ecNumber evidence="1">2.4.1.18</ecNumber>
    </recommendedName>
    <alternativeName>
        <fullName evidence="1">1,4-alpha-D-glucan:1,4-alpha-D-glucan 6-glucosyl-transferase</fullName>
    </alternativeName>
    <alternativeName>
        <fullName evidence="1">Alpha-(1-&gt;4)-glucan branching enzyme</fullName>
    </alternativeName>
    <alternativeName>
        <fullName evidence="1">Glycogen branching enzyme</fullName>
        <shortName evidence="1">BE</shortName>
    </alternativeName>
</protein>
<gene>
    <name evidence="1" type="primary">glgB</name>
    <name type="ordered locus">SSON_3672</name>
</gene>
<comment type="function">
    <text evidence="1">Catalyzes the formation of the alpha-1,6-glucosidic linkages in glycogen by scission of a 1,4-alpha-linked oligosaccharide from growing alpha-1,4-glucan chains and the subsequent attachment of the oligosaccharide to the alpha-1,6 position.</text>
</comment>
<comment type="catalytic activity">
    <reaction evidence="1">
        <text>Transfers a segment of a (1-&gt;4)-alpha-D-glucan chain to a primary hydroxy group in a similar glucan chain.</text>
        <dbReference type="EC" id="2.4.1.18"/>
    </reaction>
</comment>
<comment type="pathway">
    <text evidence="1">Glycan biosynthesis; glycogen biosynthesis.</text>
</comment>
<comment type="subunit">
    <text evidence="1">Monomer.</text>
</comment>
<comment type="similarity">
    <text evidence="1">Belongs to the glycosyl hydrolase 13 family. GlgB subfamily.</text>
</comment>
<sequence length="728" mass="84337">MSDRIDRDVINALIAGHFADPFSVLGMHKTTAGLEVRALLPDATDVWVIEPKTGRKLAKLECLDSRGFFSGVIPRRKNFFRYQLAVVWHGQQNLIDDPYRFGPLIQEMDAWLLSEGTHLRPYETLGAHADTMDGVTGTRFSVWAPNARRVSVVGQFNYWDGRRHPMRLRKESGIWELFIPGAHNGQLYKYEMIDANGNLRLKSDPYAFEAQMRPETASLICGLPEKVVQTEERKKANQFDAPISIYEVHLGSWRRHTDNNFWLSYRELADQLVPYAKWMGFTHLELLPINEHPFDGSWGYQPTGLYAPTRRFGTRDDFRYFIDAAHAAGLNVILDWVPGHFPTDDFALAEFDGTNLYEHSDPREGYHQDWNTLIYNYGRREVSNFLVGNALYWIERFGIDALRVDAVASMIYRDYSRKEGEWIPNEFGGRENLEAIEFLRNTNRILGEQVSGAVTMAEESTDFPGVSRPQDMGGLGFWYKWNLGWMHDTLDYMKLDPVYRQYHHDKLTFGILYNYTENFVLPLSHDEVVHGKKSILDRMPGDAWQKFANLRAYYGWMWAFPGKKLLFMGNEFAQGREWNHDASLDWHLLEGGDNWHHGVQRLVRDLNLTYRHHKAMHELDFDPYGFEWLVVDDKERSVLIFVRRDKEGNEIIVASNFTPVPRHDYRFGINQPGKWREILNTDSMHYHGSNAGNGGTVHSDEIASHGRQHSLSLTLPPLATIWLVREAE</sequence>
<name>GLGB_SHISS</name>